<dbReference type="EMBL" id="CP001205">
    <property type="protein sequence ID" value="ACK74604.1"/>
    <property type="molecule type" value="Genomic_DNA"/>
</dbReference>
<dbReference type="RefSeq" id="WP_002657228.1">
    <property type="nucleotide sequence ID" value="NC_011728.1"/>
</dbReference>
<dbReference type="SMR" id="B7J0P8"/>
<dbReference type="GeneID" id="56567381"/>
<dbReference type="KEGG" id="bbz:BbuZS7_0832"/>
<dbReference type="HOGENOM" id="CLU_089475_6_5_12"/>
<dbReference type="Proteomes" id="UP000006901">
    <property type="component" value="Chromosome"/>
</dbReference>
<dbReference type="GO" id="GO:0005829">
    <property type="term" value="C:cytosol"/>
    <property type="evidence" value="ECO:0007669"/>
    <property type="project" value="TreeGrafter"/>
</dbReference>
<dbReference type="GO" id="GO:0043024">
    <property type="term" value="F:ribosomal small subunit binding"/>
    <property type="evidence" value="ECO:0007669"/>
    <property type="project" value="TreeGrafter"/>
</dbReference>
<dbReference type="GO" id="GO:0030490">
    <property type="term" value="P:maturation of SSU-rRNA"/>
    <property type="evidence" value="ECO:0007669"/>
    <property type="project" value="UniProtKB-UniRule"/>
</dbReference>
<dbReference type="Gene3D" id="3.30.300.20">
    <property type="match status" value="1"/>
</dbReference>
<dbReference type="HAMAP" id="MF_00003">
    <property type="entry name" value="RbfA"/>
    <property type="match status" value="1"/>
</dbReference>
<dbReference type="InterPro" id="IPR015946">
    <property type="entry name" value="KH_dom-like_a/b"/>
</dbReference>
<dbReference type="InterPro" id="IPR000238">
    <property type="entry name" value="RbfA"/>
</dbReference>
<dbReference type="InterPro" id="IPR023799">
    <property type="entry name" value="RbfA_dom_sf"/>
</dbReference>
<dbReference type="InterPro" id="IPR020053">
    <property type="entry name" value="Ribosome-bd_factorA_CS"/>
</dbReference>
<dbReference type="NCBIfam" id="TIGR00082">
    <property type="entry name" value="rbfA"/>
    <property type="match status" value="1"/>
</dbReference>
<dbReference type="PANTHER" id="PTHR33515">
    <property type="entry name" value="RIBOSOME-BINDING FACTOR A, CHLOROPLASTIC-RELATED"/>
    <property type="match status" value="1"/>
</dbReference>
<dbReference type="PANTHER" id="PTHR33515:SF1">
    <property type="entry name" value="RIBOSOME-BINDING FACTOR A, CHLOROPLASTIC-RELATED"/>
    <property type="match status" value="1"/>
</dbReference>
<dbReference type="Pfam" id="PF02033">
    <property type="entry name" value="RBFA"/>
    <property type="match status" value="1"/>
</dbReference>
<dbReference type="SUPFAM" id="SSF89919">
    <property type="entry name" value="Ribosome-binding factor A, RbfA"/>
    <property type="match status" value="1"/>
</dbReference>
<dbReference type="PROSITE" id="PS01319">
    <property type="entry name" value="RBFA"/>
    <property type="match status" value="1"/>
</dbReference>
<organism>
    <name type="scientific">Borreliella burgdorferi (strain ZS7)</name>
    <name type="common">Borrelia burgdorferi</name>
    <dbReference type="NCBI Taxonomy" id="445985"/>
    <lineage>
        <taxon>Bacteria</taxon>
        <taxon>Pseudomonadati</taxon>
        <taxon>Spirochaetota</taxon>
        <taxon>Spirochaetia</taxon>
        <taxon>Spirochaetales</taxon>
        <taxon>Borreliaceae</taxon>
        <taxon>Borreliella</taxon>
    </lineage>
</organism>
<name>RBFA_BORBZ</name>
<sequence>MYKNIKKFKLESFIAQEIGNLIVSGGIKDPRIHSFLTVVKVEFSKDLINAKVFMGSIKEGASLDNAVKALNNAKGFIQSQIIKRIKVRSTPKLLFVKDDSLSKSFYVNKLIEGLNTTREN</sequence>
<reference key="1">
    <citation type="journal article" date="2011" name="J. Bacteriol.">
        <title>Whole-genome sequences of thirteen isolates of Borrelia burgdorferi.</title>
        <authorList>
            <person name="Schutzer S.E."/>
            <person name="Fraser-Liggett C.M."/>
            <person name="Casjens S.R."/>
            <person name="Qiu W.G."/>
            <person name="Dunn J.J."/>
            <person name="Mongodin E.F."/>
            <person name="Luft B.J."/>
        </authorList>
    </citation>
    <scope>NUCLEOTIDE SEQUENCE [LARGE SCALE GENOMIC DNA]</scope>
    <source>
        <strain>ZS7</strain>
    </source>
</reference>
<proteinExistence type="inferred from homology"/>
<accession>B7J0P8</accession>
<feature type="chain" id="PRO_1000193234" description="Ribosome-binding factor A">
    <location>
        <begin position="1"/>
        <end position="120"/>
    </location>
</feature>
<protein>
    <recommendedName>
        <fullName evidence="1">Ribosome-binding factor A</fullName>
    </recommendedName>
</protein>
<comment type="function">
    <text evidence="1">One of several proteins that assist in the late maturation steps of the functional core of the 30S ribosomal subunit. Associates with free 30S ribosomal subunits (but not with 30S subunits that are part of 70S ribosomes or polysomes). Required for efficient processing of 16S rRNA. May interact with the 5'-terminal helix region of 16S rRNA.</text>
</comment>
<comment type="subunit">
    <text evidence="1">Monomer. Binds 30S ribosomal subunits, but not 50S ribosomal subunits or 70S ribosomes.</text>
</comment>
<comment type="subcellular location">
    <subcellularLocation>
        <location evidence="1">Cytoplasm</location>
    </subcellularLocation>
</comment>
<comment type="similarity">
    <text evidence="1">Belongs to the RbfA family.</text>
</comment>
<evidence type="ECO:0000255" key="1">
    <source>
        <dbReference type="HAMAP-Rule" id="MF_00003"/>
    </source>
</evidence>
<keyword id="KW-0963">Cytoplasm</keyword>
<keyword id="KW-0690">Ribosome biogenesis</keyword>
<gene>
    <name evidence="1" type="primary">rbfA</name>
    <name type="ordered locus">BbuZS7_0832</name>
</gene>